<gene>
    <name evidence="1" type="primary">LIP5</name>
    <name type="ORF">EC1118_1O4_4192g</name>
</gene>
<protein>
    <recommendedName>
        <fullName evidence="1">Lipoyl synthase, mitochondrial</fullName>
        <ecNumber evidence="1">2.8.1.8</ecNumber>
    </recommendedName>
    <alternativeName>
        <fullName evidence="1">Lipoate synthase</fullName>
        <shortName evidence="1">LS</shortName>
        <shortName evidence="1">Lip-syn</shortName>
    </alternativeName>
    <alternativeName>
        <fullName evidence="1">Lipoic acid synthase</fullName>
    </alternativeName>
</protein>
<name>LIPA_YEAS8</name>
<dbReference type="EC" id="2.8.1.8" evidence="1"/>
<dbReference type="EMBL" id="FN394216">
    <property type="protein sequence ID" value="CAY86484.1"/>
    <property type="molecule type" value="Genomic_DNA"/>
</dbReference>
<dbReference type="SMR" id="C8ZGV5"/>
<dbReference type="HOGENOM" id="CLU_033144_0_2_1"/>
<dbReference type="OrthoDB" id="20491at4893"/>
<dbReference type="UniPathway" id="UPA00538">
    <property type="reaction ID" value="UER00593"/>
</dbReference>
<dbReference type="Proteomes" id="UP000000286">
    <property type="component" value="Chromosome XV, Scaffold EC1118_1O4"/>
</dbReference>
<dbReference type="GO" id="GO:0005739">
    <property type="term" value="C:mitochondrion"/>
    <property type="evidence" value="ECO:0007669"/>
    <property type="project" value="UniProtKB-SubCell"/>
</dbReference>
<dbReference type="GO" id="GO:0051539">
    <property type="term" value="F:4 iron, 4 sulfur cluster binding"/>
    <property type="evidence" value="ECO:0007669"/>
    <property type="project" value="UniProtKB-UniRule"/>
</dbReference>
<dbReference type="GO" id="GO:0016992">
    <property type="term" value="F:lipoate synthase activity"/>
    <property type="evidence" value="ECO:0007669"/>
    <property type="project" value="UniProtKB-UniRule"/>
</dbReference>
<dbReference type="GO" id="GO:0046872">
    <property type="term" value="F:metal ion binding"/>
    <property type="evidence" value="ECO:0007669"/>
    <property type="project" value="UniProtKB-KW"/>
</dbReference>
<dbReference type="CDD" id="cd01335">
    <property type="entry name" value="Radical_SAM"/>
    <property type="match status" value="1"/>
</dbReference>
<dbReference type="FunFam" id="3.20.20.70:FF:000036">
    <property type="entry name" value="Lipoyl synthase, mitochondrial"/>
    <property type="match status" value="1"/>
</dbReference>
<dbReference type="Gene3D" id="3.20.20.70">
    <property type="entry name" value="Aldolase class I"/>
    <property type="match status" value="1"/>
</dbReference>
<dbReference type="HAMAP" id="MF_00206">
    <property type="entry name" value="Lipoyl_synth"/>
    <property type="match status" value="1"/>
</dbReference>
<dbReference type="InterPro" id="IPR013785">
    <property type="entry name" value="Aldolase_TIM"/>
</dbReference>
<dbReference type="InterPro" id="IPR006638">
    <property type="entry name" value="Elp3/MiaA/NifB-like_rSAM"/>
</dbReference>
<dbReference type="InterPro" id="IPR031691">
    <property type="entry name" value="LIAS_N"/>
</dbReference>
<dbReference type="InterPro" id="IPR003698">
    <property type="entry name" value="Lipoyl_synth"/>
</dbReference>
<dbReference type="InterPro" id="IPR007197">
    <property type="entry name" value="rSAM"/>
</dbReference>
<dbReference type="NCBIfam" id="TIGR00510">
    <property type="entry name" value="lipA"/>
    <property type="match status" value="1"/>
</dbReference>
<dbReference type="NCBIfam" id="NF004019">
    <property type="entry name" value="PRK05481.1"/>
    <property type="match status" value="1"/>
</dbReference>
<dbReference type="NCBIfam" id="NF009544">
    <property type="entry name" value="PRK12928.1"/>
    <property type="match status" value="1"/>
</dbReference>
<dbReference type="PANTHER" id="PTHR10949">
    <property type="entry name" value="LIPOYL SYNTHASE"/>
    <property type="match status" value="1"/>
</dbReference>
<dbReference type="PANTHER" id="PTHR10949:SF0">
    <property type="entry name" value="LIPOYL SYNTHASE, MITOCHONDRIAL"/>
    <property type="match status" value="1"/>
</dbReference>
<dbReference type="Pfam" id="PF16881">
    <property type="entry name" value="LIAS_N"/>
    <property type="match status" value="1"/>
</dbReference>
<dbReference type="Pfam" id="PF04055">
    <property type="entry name" value="Radical_SAM"/>
    <property type="match status" value="1"/>
</dbReference>
<dbReference type="PIRSF" id="PIRSF005963">
    <property type="entry name" value="Lipoyl_synth"/>
    <property type="match status" value="1"/>
</dbReference>
<dbReference type="SFLD" id="SFLDF00271">
    <property type="entry name" value="lipoyl_synthase"/>
    <property type="match status" value="1"/>
</dbReference>
<dbReference type="SFLD" id="SFLDG01058">
    <property type="entry name" value="lipoyl_synthase_like"/>
    <property type="match status" value="1"/>
</dbReference>
<dbReference type="SMART" id="SM00729">
    <property type="entry name" value="Elp3"/>
    <property type="match status" value="1"/>
</dbReference>
<dbReference type="SUPFAM" id="SSF102114">
    <property type="entry name" value="Radical SAM enzymes"/>
    <property type="match status" value="1"/>
</dbReference>
<dbReference type="PROSITE" id="PS51918">
    <property type="entry name" value="RADICAL_SAM"/>
    <property type="match status" value="1"/>
</dbReference>
<sequence length="414" mass="46247">MYRRSVGVLFVGRNTRWISSTIRCGTSATRPIRSNALNTDSDNASVRVPVGNSTEVENATSQLTGTSGKRRKGNRKRITEFKDALNLGPSFADFVSGKASKMILDPLEKARQNTEEAKKLPRWLKVPIPKGTNYHKLKGDVKELGLSTVCEEARCPNIGECWGGKDKSKATATIMLLGDTCTRGCRFCSVKTNRTPSKPDPMEPENTAEAIKRWGLGYVVLTTVDRDDLVDGGANHLAETVRKIKQKAPNTLVETLSGDFRGDLKMVDIMAQCGLDVYAHNLETVESLTPHVRDRRATYRQSLSVLERAKATVPSLITKTSIMLGLGETDEQITQTLKDLRNIQCDVVTFGQYMRPTKRHMKVVEYVKPEKFDYWKERALEMGFLYCASGPLVRSSYKAGEAFIENVLKKRNMK</sequence>
<accession>C8ZGV5</accession>
<comment type="function">
    <text evidence="1">Catalyzes the radical-mediated insertion of two sulfur atoms into the C-6 and C-8 positions of the octanoyl moiety bound to the lipoyl domains of lipoate-dependent enzymes, thereby converting the octanoylated domains into lipoylated derivatives.</text>
</comment>
<comment type="catalytic activity">
    <reaction evidence="1">
        <text>[[Fe-S] cluster scaffold protein carrying a second [4Fe-4S](2+) cluster] + N(6)-octanoyl-L-lysyl-[protein] + 2 oxidized [2Fe-2S]-[ferredoxin] + 2 S-adenosyl-L-methionine + 4 H(+) = [[Fe-S] cluster scaffold protein] + N(6)-[(R)-dihydrolipoyl]-L-lysyl-[protein] + 4 Fe(3+) + 2 hydrogen sulfide + 2 5'-deoxyadenosine + 2 L-methionine + 2 reduced [2Fe-2S]-[ferredoxin]</text>
        <dbReference type="Rhea" id="RHEA:16585"/>
        <dbReference type="Rhea" id="RHEA-COMP:9928"/>
        <dbReference type="Rhea" id="RHEA-COMP:10000"/>
        <dbReference type="Rhea" id="RHEA-COMP:10001"/>
        <dbReference type="Rhea" id="RHEA-COMP:10475"/>
        <dbReference type="Rhea" id="RHEA-COMP:14568"/>
        <dbReference type="Rhea" id="RHEA-COMP:14569"/>
        <dbReference type="ChEBI" id="CHEBI:15378"/>
        <dbReference type="ChEBI" id="CHEBI:17319"/>
        <dbReference type="ChEBI" id="CHEBI:29034"/>
        <dbReference type="ChEBI" id="CHEBI:29919"/>
        <dbReference type="ChEBI" id="CHEBI:33722"/>
        <dbReference type="ChEBI" id="CHEBI:33737"/>
        <dbReference type="ChEBI" id="CHEBI:33738"/>
        <dbReference type="ChEBI" id="CHEBI:57844"/>
        <dbReference type="ChEBI" id="CHEBI:59789"/>
        <dbReference type="ChEBI" id="CHEBI:78809"/>
        <dbReference type="ChEBI" id="CHEBI:83100"/>
        <dbReference type="EC" id="2.8.1.8"/>
    </reaction>
</comment>
<comment type="cofactor">
    <cofactor evidence="1">
        <name>[4Fe-4S] cluster</name>
        <dbReference type="ChEBI" id="CHEBI:49883"/>
    </cofactor>
    <text evidence="1">Binds 2 [4Fe-4S] clusters per subunit. One cluster is coordinated with 3 cysteines and an exchangeable S-adenosyl-L-methionine.</text>
</comment>
<comment type="pathway">
    <text evidence="1">Protein modification; protein lipoylation via endogenous pathway; protein N(6)-(lipoyl)lysine from octanoyl-[acyl-carrier-protein]: step 2/2.</text>
</comment>
<comment type="subcellular location">
    <subcellularLocation>
        <location evidence="1">Mitochondrion</location>
    </subcellularLocation>
</comment>
<comment type="similarity">
    <text evidence="1">Belongs to the radical SAM superfamily. Lipoyl synthase family.</text>
</comment>
<proteinExistence type="inferred from homology"/>
<keyword id="KW-0004">4Fe-4S</keyword>
<keyword id="KW-0408">Iron</keyword>
<keyword id="KW-0411">Iron-sulfur</keyword>
<keyword id="KW-0479">Metal-binding</keyword>
<keyword id="KW-0496">Mitochondrion</keyword>
<keyword id="KW-0949">S-adenosyl-L-methionine</keyword>
<keyword id="KW-0808">Transferase</keyword>
<keyword id="KW-0809">Transit peptide</keyword>
<organism>
    <name type="scientific">Saccharomyces cerevisiae (strain Lalvin EC1118 / Prise de mousse)</name>
    <name type="common">Baker's yeast</name>
    <dbReference type="NCBI Taxonomy" id="643680"/>
    <lineage>
        <taxon>Eukaryota</taxon>
        <taxon>Fungi</taxon>
        <taxon>Dikarya</taxon>
        <taxon>Ascomycota</taxon>
        <taxon>Saccharomycotina</taxon>
        <taxon>Saccharomycetes</taxon>
        <taxon>Saccharomycetales</taxon>
        <taxon>Saccharomycetaceae</taxon>
        <taxon>Saccharomyces</taxon>
    </lineage>
</organism>
<evidence type="ECO:0000255" key="1">
    <source>
        <dbReference type="HAMAP-Rule" id="MF_03123"/>
    </source>
</evidence>
<evidence type="ECO:0000255" key="2">
    <source>
        <dbReference type="PROSITE-ProRule" id="PRU01266"/>
    </source>
</evidence>
<evidence type="ECO:0000256" key="3">
    <source>
        <dbReference type="SAM" id="MobiDB-lite"/>
    </source>
</evidence>
<reference key="1">
    <citation type="journal article" date="2009" name="Proc. Natl. Acad. Sci. U.S.A.">
        <title>Eukaryote-to-eukaryote gene transfer events revealed by the genome sequence of the wine yeast Saccharomyces cerevisiae EC1118.</title>
        <authorList>
            <person name="Novo M."/>
            <person name="Bigey F."/>
            <person name="Beyne E."/>
            <person name="Galeote V."/>
            <person name="Gavory F."/>
            <person name="Mallet S."/>
            <person name="Cambon B."/>
            <person name="Legras J.-L."/>
            <person name="Wincker P."/>
            <person name="Casaregola S."/>
            <person name="Dequin S."/>
        </authorList>
    </citation>
    <scope>NUCLEOTIDE SEQUENCE [LARGE SCALE GENOMIC DNA]</scope>
    <source>
        <strain>Lalvin EC1118 / Prise de mousse</strain>
    </source>
</reference>
<feature type="transit peptide" description="Mitochondrion" evidence="1">
    <location>
        <begin position="1"/>
        <end position="18"/>
    </location>
</feature>
<feature type="chain" id="PRO_0000398288" description="Lipoyl synthase, mitochondrial">
    <location>
        <begin position="19"/>
        <end position="414"/>
    </location>
</feature>
<feature type="domain" description="Radical SAM core" evidence="2">
    <location>
        <begin position="164"/>
        <end position="385"/>
    </location>
</feature>
<feature type="region of interest" description="Disordered" evidence="3">
    <location>
        <begin position="51"/>
        <end position="75"/>
    </location>
</feature>
<feature type="compositionally biased region" description="Polar residues" evidence="3">
    <location>
        <begin position="51"/>
        <end position="67"/>
    </location>
</feature>
<feature type="binding site" evidence="1">
    <location>
        <position position="150"/>
    </location>
    <ligand>
        <name>[4Fe-4S] cluster</name>
        <dbReference type="ChEBI" id="CHEBI:49883"/>
        <label>1</label>
    </ligand>
</feature>
<feature type="binding site" evidence="1">
    <location>
        <position position="155"/>
    </location>
    <ligand>
        <name>[4Fe-4S] cluster</name>
        <dbReference type="ChEBI" id="CHEBI:49883"/>
        <label>1</label>
    </ligand>
</feature>
<feature type="binding site" evidence="1">
    <location>
        <position position="161"/>
    </location>
    <ligand>
        <name>[4Fe-4S] cluster</name>
        <dbReference type="ChEBI" id="CHEBI:49883"/>
        <label>1</label>
    </ligand>
</feature>
<feature type="binding site" evidence="1">
    <location>
        <position position="181"/>
    </location>
    <ligand>
        <name>[4Fe-4S] cluster</name>
        <dbReference type="ChEBI" id="CHEBI:49883"/>
        <label>2</label>
        <note>4Fe-4S-S-AdoMet</note>
    </ligand>
</feature>
<feature type="binding site" evidence="1">
    <location>
        <position position="185"/>
    </location>
    <ligand>
        <name>[4Fe-4S] cluster</name>
        <dbReference type="ChEBI" id="CHEBI:49883"/>
        <label>2</label>
        <note>4Fe-4S-S-AdoMet</note>
    </ligand>
</feature>
<feature type="binding site" evidence="1">
    <location>
        <position position="188"/>
    </location>
    <ligand>
        <name>[4Fe-4S] cluster</name>
        <dbReference type="ChEBI" id="CHEBI:49883"/>
        <label>2</label>
        <note>4Fe-4S-S-AdoMet</note>
    </ligand>
</feature>
<feature type="binding site" evidence="1">
    <location>
        <position position="396"/>
    </location>
    <ligand>
        <name>[4Fe-4S] cluster</name>
        <dbReference type="ChEBI" id="CHEBI:49883"/>
        <label>1</label>
    </ligand>
</feature>